<evidence type="ECO:0000250" key="1">
    <source>
        <dbReference type="UniProtKB" id="P26281"/>
    </source>
</evidence>
<evidence type="ECO:0000305" key="2"/>
<name>HPPK_PSEPU</name>
<keyword id="KW-0067">ATP-binding</keyword>
<keyword id="KW-0289">Folate biosynthesis</keyword>
<keyword id="KW-0418">Kinase</keyword>
<keyword id="KW-0547">Nucleotide-binding</keyword>
<keyword id="KW-0808">Transferase</keyword>
<sequence length="120" mass="13118">MTIRAYVGLGSNLDSPAEQLRSAFQALDQVEATRLVAASALYTSDSLLPGQPXYTNAVAALDTALAPLALLDALQAIENDQGXVRKERWGPRTLDLDILLFSDQVLDQPRLKVPHYHMHA</sequence>
<feature type="chain" id="PRO_0000168258" description="2-amino-4-hydroxy-6-hydroxymethyldihydropteridine pyrophosphokinase">
    <location>
        <begin position="1"/>
        <end position="120" status="greater than"/>
    </location>
</feature>
<feature type="non-terminal residue">
    <location>
        <position position="120"/>
    </location>
</feature>
<proteinExistence type="inferred from homology"/>
<accession>O87790</accession>
<protein>
    <recommendedName>
        <fullName evidence="1">2-amino-4-hydroxy-6-hydroxymethyldihydropteridine pyrophosphokinase</fullName>
        <ecNumber evidence="1">2.7.6.3</ecNumber>
    </recommendedName>
    <alternativeName>
        <fullName evidence="1">6-hydroxymethyl-7,8-dihydropterin pyrophosphokinase</fullName>
        <shortName evidence="1">PPPK</shortName>
    </alternativeName>
    <alternativeName>
        <fullName evidence="1">7,8-dihydro-6-hydroxymethylpterin-pyrophosphokinase</fullName>
        <shortName evidence="1">HPPK</shortName>
    </alternativeName>
</protein>
<dbReference type="EC" id="2.7.6.3" evidence="1"/>
<dbReference type="EMBL" id="Y18131">
    <property type="protein sequence ID" value="CAA77046.1"/>
    <property type="molecule type" value="Genomic_DNA"/>
</dbReference>
<dbReference type="UniPathway" id="UPA00077">
    <property type="reaction ID" value="UER00155"/>
</dbReference>
<dbReference type="GO" id="GO:0003848">
    <property type="term" value="F:2-amino-4-hydroxy-6-hydroxymethyldihydropteridine diphosphokinase activity"/>
    <property type="evidence" value="ECO:0007669"/>
    <property type="project" value="UniProtKB-EC"/>
</dbReference>
<dbReference type="GO" id="GO:0005524">
    <property type="term" value="F:ATP binding"/>
    <property type="evidence" value="ECO:0007669"/>
    <property type="project" value="UniProtKB-KW"/>
</dbReference>
<dbReference type="GO" id="GO:0016301">
    <property type="term" value="F:kinase activity"/>
    <property type="evidence" value="ECO:0007669"/>
    <property type="project" value="UniProtKB-KW"/>
</dbReference>
<dbReference type="GO" id="GO:0046656">
    <property type="term" value="P:folic acid biosynthetic process"/>
    <property type="evidence" value="ECO:0007669"/>
    <property type="project" value="UniProtKB-KW"/>
</dbReference>
<dbReference type="GO" id="GO:0046654">
    <property type="term" value="P:tetrahydrofolate biosynthetic process"/>
    <property type="evidence" value="ECO:0007669"/>
    <property type="project" value="UniProtKB-UniPathway"/>
</dbReference>
<dbReference type="CDD" id="cd00483">
    <property type="entry name" value="HPPK"/>
    <property type="match status" value="1"/>
</dbReference>
<dbReference type="Gene3D" id="3.30.70.560">
    <property type="entry name" value="7,8-Dihydro-6-hydroxymethylpterin-pyrophosphokinase HPPK"/>
    <property type="match status" value="1"/>
</dbReference>
<dbReference type="InterPro" id="IPR000550">
    <property type="entry name" value="Hppk"/>
</dbReference>
<dbReference type="InterPro" id="IPR035907">
    <property type="entry name" value="Hppk_sf"/>
</dbReference>
<dbReference type="NCBIfam" id="TIGR01498">
    <property type="entry name" value="folK"/>
    <property type="match status" value="1"/>
</dbReference>
<dbReference type="PANTHER" id="PTHR43071">
    <property type="entry name" value="2-AMINO-4-HYDROXY-6-HYDROXYMETHYLDIHYDROPTERIDINE PYROPHOSPHOKINASE"/>
    <property type="match status" value="1"/>
</dbReference>
<dbReference type="PANTHER" id="PTHR43071:SF1">
    <property type="entry name" value="2-AMINO-4-HYDROXY-6-HYDROXYMETHYLDIHYDROPTERIDINE PYROPHOSPHOKINASE"/>
    <property type="match status" value="1"/>
</dbReference>
<dbReference type="Pfam" id="PF01288">
    <property type="entry name" value="HPPK"/>
    <property type="match status" value="1"/>
</dbReference>
<dbReference type="SUPFAM" id="SSF55083">
    <property type="entry name" value="6-hydroxymethyl-7,8-dihydropterin pyrophosphokinase, HPPK"/>
    <property type="match status" value="1"/>
</dbReference>
<dbReference type="PROSITE" id="PS00794">
    <property type="entry name" value="HPPK"/>
    <property type="match status" value="1"/>
</dbReference>
<organism>
    <name type="scientific">Pseudomonas putida</name>
    <name type="common">Arthrobacter siderocapsulatus</name>
    <dbReference type="NCBI Taxonomy" id="303"/>
    <lineage>
        <taxon>Bacteria</taxon>
        <taxon>Pseudomonadati</taxon>
        <taxon>Pseudomonadota</taxon>
        <taxon>Gammaproteobacteria</taxon>
        <taxon>Pseudomonadales</taxon>
        <taxon>Pseudomonadaceae</taxon>
        <taxon>Pseudomonas</taxon>
    </lineage>
</organism>
<comment type="function">
    <text evidence="1">Catalyzes the transfer of pyrophosphate from adenosine triphosphate (ATP) to 6-hydroxymethyl-7,8-dihydropterin, an enzymatic step in folate biosynthesis pathway.</text>
</comment>
<comment type="catalytic activity">
    <reaction evidence="1">
        <text>6-hydroxymethyl-7,8-dihydropterin + ATP = (7,8-dihydropterin-6-yl)methyl diphosphate + AMP + H(+)</text>
        <dbReference type="Rhea" id="RHEA:11412"/>
        <dbReference type="ChEBI" id="CHEBI:15378"/>
        <dbReference type="ChEBI" id="CHEBI:30616"/>
        <dbReference type="ChEBI" id="CHEBI:44841"/>
        <dbReference type="ChEBI" id="CHEBI:72950"/>
        <dbReference type="ChEBI" id="CHEBI:456215"/>
        <dbReference type="EC" id="2.7.6.3"/>
    </reaction>
</comment>
<comment type="pathway">
    <text evidence="1">Cofactor biosynthesis; tetrahydrofolate biosynthesis; 2-amino-4-hydroxy-6-hydroxymethyl-7,8-dihydropteridine diphosphate from 7,8-dihydroneopterin triphosphate: step 4/4.</text>
</comment>
<comment type="similarity">
    <text evidence="2">Belongs to the HPPK family.</text>
</comment>
<gene>
    <name type="primary">folK</name>
</gene>
<reference key="1">
    <citation type="submission" date="1998-09" db="EMBL/GenBank/DDBJ databases">
        <title>Identification and cloning of genes involved in RNA turnover in Pseudomonas putida.</title>
        <authorList>
            <person name="Favaro R."/>
            <person name="Deho' G."/>
        </authorList>
    </citation>
    <scope>NUCLEOTIDE SEQUENCE [GENOMIC DNA]</scope>
    <source>
        <strain>TMB</strain>
    </source>
</reference>